<feature type="chain" id="PRO_0000336044" description="Coiled-coil domain-containing protein 30">
    <location>
        <begin position="1"/>
        <end position="783"/>
    </location>
</feature>
<feature type="region of interest" description="Disordered" evidence="2">
    <location>
        <begin position="1"/>
        <end position="26"/>
    </location>
</feature>
<feature type="region of interest" description="Disordered" evidence="2">
    <location>
        <begin position="101"/>
        <end position="191"/>
    </location>
</feature>
<feature type="region of interest" description="Disordered" evidence="2">
    <location>
        <begin position="209"/>
        <end position="231"/>
    </location>
</feature>
<feature type="region of interest" description="Disordered" evidence="2">
    <location>
        <begin position="731"/>
        <end position="755"/>
    </location>
</feature>
<feature type="coiled-coil region" evidence="1">
    <location>
        <begin position="22"/>
        <end position="98"/>
    </location>
</feature>
<feature type="coiled-coil region" evidence="1">
    <location>
        <begin position="165"/>
        <end position="497"/>
    </location>
</feature>
<feature type="coiled-coil region" evidence="1">
    <location>
        <begin position="527"/>
        <end position="622"/>
    </location>
</feature>
<feature type="compositionally biased region" description="Basic and acidic residues" evidence="2">
    <location>
        <begin position="1"/>
        <end position="22"/>
    </location>
</feature>
<feature type="compositionally biased region" description="Polar residues" evidence="2">
    <location>
        <begin position="106"/>
        <end position="115"/>
    </location>
</feature>
<feature type="compositionally biased region" description="Basic and acidic residues" evidence="2">
    <location>
        <begin position="131"/>
        <end position="191"/>
    </location>
</feature>
<feature type="splice variant" id="VSP_033791" description="In isoform 2." evidence="4">
    <location>
        <begin position="1"/>
        <end position="211"/>
    </location>
</feature>
<feature type="splice variant" id="VSP_033792" description="In isoform 2." evidence="4">
    <original>SQSSGDSSDDSGA</original>
    <variation>MIHPPRPPKVLGL</variation>
    <location>
        <begin position="212"/>
        <end position="224"/>
    </location>
</feature>
<feature type="sequence variant" id="VAR_043472" description="In dbSNP:rs16829829.">
    <original>H</original>
    <variation>N</variation>
    <location>
        <position position="772"/>
    </location>
</feature>
<feature type="sequence conflict" description="In Ref. 1; AAX19141." evidence="5" ref="1">
    <original>E</original>
    <variation>G</variation>
    <location>
        <position position="282"/>
    </location>
</feature>
<sequence length="783" mass="91333">MSQEKNEMFESEWSKEREREKQLASGLDTAEKALKVESEELQKSKSELICLYNEVHNLPGESESKDHFLIACDLLQRENSELETKVLKLSQEFAQLNHFTLGGKTAPSNLITSENTCKDPESNEPILETEIQSRKEETEELCPKLGERKQKEIPEESVKEGSFPREGQKEEGSQQNRDMKDEEKEQQLTMKPEEIVRLREELSHINQSLLQSQSSGDSSDDSGAQHPSSGEKLKYNQQGEVQQLHQNLHRLQILCNSAENELRYERGQNLDLKQHNSLLQEENIKIKIELKHAQQKLLDSTKMCSSLTAEYKHCQQKIKELELEVLKHTQSIKSQNNLQEKLVQEKSKVADAEEKILDLQRKLEHAHKVCLTDTCISEKQQLEEKIKEATQNEAKVKQQYQEEQQKRKLLYQNVDELHRQVRTLQDKENLLEMTCSQQQSRIQQQEALLKQLENEKRKYDEHVKSNQELSEKLSKLQQEKEALREEYLRLLKLLNVHVRNYNEKHHQQKVKLQKVKYRLTNEVELRDKRINQFEDEIGILQHKIEKEKAIQDQITAQNDTLLLEKRKLQEQVIEQEQLIHSNKWTISSIQSRVLYMDKENKQLQENSLRLTQQIGFLERIIRSIHIRRGENLKEFPVPKWWHRGKLASLPPTKKQKEIYSTEVFTSNNAELQHEDESVPEATEKWKHSEQMETTISDILESEVVNEILPLSNSSFSGKGLVESFASLQETEEIKSKEAMASSKSPEKSPENLVCSQNSEAGYINVASLKETHGIQEQDQKSEL</sequence>
<accession>Q5VVM6</accession>
<accession>Q14F06</accession>
<accession>Q5VVM5</accession>
<organism>
    <name type="scientific">Homo sapiens</name>
    <name type="common">Human</name>
    <dbReference type="NCBI Taxonomy" id="9606"/>
    <lineage>
        <taxon>Eukaryota</taxon>
        <taxon>Metazoa</taxon>
        <taxon>Chordata</taxon>
        <taxon>Craniata</taxon>
        <taxon>Vertebrata</taxon>
        <taxon>Euteleostomi</taxon>
        <taxon>Mammalia</taxon>
        <taxon>Eutheria</taxon>
        <taxon>Euarchontoglires</taxon>
        <taxon>Primates</taxon>
        <taxon>Haplorrhini</taxon>
        <taxon>Catarrhini</taxon>
        <taxon>Hominidae</taxon>
        <taxon>Homo</taxon>
    </lineage>
</organism>
<gene>
    <name type="primary">CCDC30</name>
    <name type="synonym">PFDN6L</name>
</gene>
<proteinExistence type="evidence at protein level"/>
<protein>
    <recommendedName>
        <fullName>Coiled-coil domain-containing protein 30</fullName>
    </recommendedName>
    <alternativeName>
        <fullName>Prefoldin subunit 6-like protein</fullName>
    </alternativeName>
</protein>
<evidence type="ECO:0000255" key="1"/>
<evidence type="ECO:0000256" key="2">
    <source>
        <dbReference type="SAM" id="MobiDB-lite"/>
    </source>
</evidence>
<evidence type="ECO:0000269" key="3">
    <source>
    </source>
</evidence>
<evidence type="ECO:0000303" key="4">
    <source>
    </source>
</evidence>
<evidence type="ECO:0000305" key="5"/>
<keyword id="KW-0025">Alternative splicing</keyword>
<keyword id="KW-0175">Coiled coil</keyword>
<keyword id="KW-1267">Proteomics identification</keyword>
<keyword id="KW-1185">Reference proteome</keyword>
<comment type="alternative products">
    <event type="alternative splicing"/>
    <isoform>
        <id>Q5VVM6-1</id>
        <name>1</name>
        <sequence type="displayed"/>
    </isoform>
    <isoform>
        <id>Q5VVM6-2</id>
        <name>2</name>
        <sequence type="described" ref="VSP_033791 VSP_033792"/>
    </isoform>
</comment>
<comment type="tissue specificity">
    <text evidence="3">Expressed in brain, kidney, pancreas, placenta, liver, thymus and prostate.</text>
</comment>
<comment type="similarity">
    <text evidence="5">Belongs to the prefoldin subunit beta family.</text>
</comment>
<reference key="1">
    <citation type="journal article" date="2006" name="Biochem. Genet.">
        <title>Cloning and characterization of a novel human prefoldin and SPEC domain protein gene (PFD6L) from the fetal brain.</title>
        <authorList>
            <person name="Zhang J."/>
            <person name="Liu L."/>
            <person name="Zhang X."/>
            <person name="Jin F."/>
            <person name="Chen J."/>
            <person name="Ji C."/>
            <person name="Gu S."/>
            <person name="Xie Y."/>
            <person name="Mao Y."/>
        </authorList>
    </citation>
    <scope>NUCLEOTIDE SEQUENCE [MRNA] (ISOFORM 2)</scope>
    <scope>TISSUE SPECIFICITY</scope>
    <source>
        <tissue>Fetal brain</tissue>
    </source>
</reference>
<reference key="2">
    <citation type="journal article" date="2006" name="Nature">
        <title>The DNA sequence and biological annotation of human chromosome 1.</title>
        <authorList>
            <person name="Gregory S.G."/>
            <person name="Barlow K.F."/>
            <person name="McLay K.E."/>
            <person name="Kaul R."/>
            <person name="Swarbreck D."/>
            <person name="Dunham A."/>
            <person name="Scott C.E."/>
            <person name="Howe K.L."/>
            <person name="Woodfine K."/>
            <person name="Spencer C.C.A."/>
            <person name="Jones M.C."/>
            <person name="Gillson C."/>
            <person name="Searle S."/>
            <person name="Zhou Y."/>
            <person name="Kokocinski F."/>
            <person name="McDonald L."/>
            <person name="Evans R."/>
            <person name="Phillips K."/>
            <person name="Atkinson A."/>
            <person name="Cooper R."/>
            <person name="Jones C."/>
            <person name="Hall R.E."/>
            <person name="Andrews T.D."/>
            <person name="Lloyd C."/>
            <person name="Ainscough R."/>
            <person name="Almeida J.P."/>
            <person name="Ambrose K.D."/>
            <person name="Anderson F."/>
            <person name="Andrew R.W."/>
            <person name="Ashwell R.I.S."/>
            <person name="Aubin K."/>
            <person name="Babbage A.K."/>
            <person name="Bagguley C.L."/>
            <person name="Bailey J."/>
            <person name="Beasley H."/>
            <person name="Bethel G."/>
            <person name="Bird C.P."/>
            <person name="Bray-Allen S."/>
            <person name="Brown J.Y."/>
            <person name="Brown A.J."/>
            <person name="Buckley D."/>
            <person name="Burton J."/>
            <person name="Bye J."/>
            <person name="Carder C."/>
            <person name="Chapman J.C."/>
            <person name="Clark S.Y."/>
            <person name="Clarke G."/>
            <person name="Clee C."/>
            <person name="Cobley V."/>
            <person name="Collier R.E."/>
            <person name="Corby N."/>
            <person name="Coville G.J."/>
            <person name="Davies J."/>
            <person name="Deadman R."/>
            <person name="Dunn M."/>
            <person name="Earthrowl M."/>
            <person name="Ellington A.G."/>
            <person name="Errington H."/>
            <person name="Frankish A."/>
            <person name="Frankland J."/>
            <person name="French L."/>
            <person name="Garner P."/>
            <person name="Garnett J."/>
            <person name="Gay L."/>
            <person name="Ghori M.R.J."/>
            <person name="Gibson R."/>
            <person name="Gilby L.M."/>
            <person name="Gillett W."/>
            <person name="Glithero R.J."/>
            <person name="Grafham D.V."/>
            <person name="Griffiths C."/>
            <person name="Griffiths-Jones S."/>
            <person name="Grocock R."/>
            <person name="Hammond S."/>
            <person name="Harrison E.S.I."/>
            <person name="Hart E."/>
            <person name="Haugen E."/>
            <person name="Heath P.D."/>
            <person name="Holmes S."/>
            <person name="Holt K."/>
            <person name="Howden P.J."/>
            <person name="Hunt A.R."/>
            <person name="Hunt S.E."/>
            <person name="Hunter G."/>
            <person name="Isherwood J."/>
            <person name="James R."/>
            <person name="Johnson C."/>
            <person name="Johnson D."/>
            <person name="Joy A."/>
            <person name="Kay M."/>
            <person name="Kershaw J.K."/>
            <person name="Kibukawa M."/>
            <person name="Kimberley A.M."/>
            <person name="King A."/>
            <person name="Knights A.J."/>
            <person name="Lad H."/>
            <person name="Laird G."/>
            <person name="Lawlor S."/>
            <person name="Leongamornlert D.A."/>
            <person name="Lloyd D.M."/>
            <person name="Loveland J."/>
            <person name="Lovell J."/>
            <person name="Lush M.J."/>
            <person name="Lyne R."/>
            <person name="Martin S."/>
            <person name="Mashreghi-Mohammadi M."/>
            <person name="Matthews L."/>
            <person name="Matthews N.S.W."/>
            <person name="McLaren S."/>
            <person name="Milne S."/>
            <person name="Mistry S."/>
            <person name="Moore M.J.F."/>
            <person name="Nickerson T."/>
            <person name="O'Dell C.N."/>
            <person name="Oliver K."/>
            <person name="Palmeiri A."/>
            <person name="Palmer S.A."/>
            <person name="Parker A."/>
            <person name="Patel D."/>
            <person name="Pearce A.V."/>
            <person name="Peck A.I."/>
            <person name="Pelan S."/>
            <person name="Phelps K."/>
            <person name="Phillimore B.J."/>
            <person name="Plumb R."/>
            <person name="Rajan J."/>
            <person name="Raymond C."/>
            <person name="Rouse G."/>
            <person name="Saenphimmachak C."/>
            <person name="Sehra H.K."/>
            <person name="Sheridan E."/>
            <person name="Shownkeen R."/>
            <person name="Sims S."/>
            <person name="Skuce C.D."/>
            <person name="Smith M."/>
            <person name="Steward C."/>
            <person name="Subramanian S."/>
            <person name="Sycamore N."/>
            <person name="Tracey A."/>
            <person name="Tromans A."/>
            <person name="Van Helmond Z."/>
            <person name="Wall M."/>
            <person name="Wallis J.M."/>
            <person name="White S."/>
            <person name="Whitehead S.L."/>
            <person name="Wilkinson J.E."/>
            <person name="Willey D.L."/>
            <person name="Williams H."/>
            <person name="Wilming L."/>
            <person name="Wray P.W."/>
            <person name="Wu Z."/>
            <person name="Coulson A."/>
            <person name="Vaudin M."/>
            <person name="Sulston J.E."/>
            <person name="Durbin R.M."/>
            <person name="Hubbard T."/>
            <person name="Wooster R."/>
            <person name="Dunham I."/>
            <person name="Carter N.P."/>
            <person name="McVean G."/>
            <person name="Ross M.T."/>
            <person name="Harrow J."/>
            <person name="Olson M.V."/>
            <person name="Beck S."/>
            <person name="Rogers J."/>
            <person name="Bentley D.R."/>
        </authorList>
    </citation>
    <scope>NUCLEOTIDE SEQUENCE [LARGE SCALE GENOMIC DNA]</scope>
</reference>
<dbReference type="EMBL" id="AY639646">
    <property type="protein sequence ID" value="AAX19141.1"/>
    <property type="molecule type" value="mRNA"/>
</dbReference>
<dbReference type="EMBL" id="AC098484">
    <property type="status" value="NOT_ANNOTATED_CDS"/>
    <property type="molecule type" value="Genomic_DNA"/>
</dbReference>
<dbReference type="EMBL" id="AL138788">
    <property type="status" value="NOT_ANNOTATED_CDS"/>
    <property type="molecule type" value="Genomic_DNA"/>
</dbReference>
<dbReference type="EMBL" id="AL445669">
    <property type="status" value="NOT_ANNOTATED_CDS"/>
    <property type="molecule type" value="Genomic_DNA"/>
</dbReference>
<dbReference type="CCDS" id="CCDS30690.1">
    <molecule id="Q5VVM6-1"/>
</dbReference>
<dbReference type="RefSeq" id="NP_001074319.1">
    <molecule id="Q5VVM6-1"/>
    <property type="nucleotide sequence ID" value="NM_001080850.4"/>
</dbReference>
<dbReference type="RefSeq" id="XP_011540369.1">
    <property type="nucleotide sequence ID" value="XM_011542067.2"/>
</dbReference>
<dbReference type="RefSeq" id="XP_011540370.1">
    <property type="nucleotide sequence ID" value="XM_011542068.2"/>
</dbReference>
<dbReference type="RefSeq" id="XP_016857714.1">
    <property type="nucleotide sequence ID" value="XM_017002225.1"/>
</dbReference>
<dbReference type="RefSeq" id="XP_016857715.1">
    <property type="nucleotide sequence ID" value="XM_017002226.1"/>
</dbReference>
<dbReference type="SMR" id="Q5VVM6"/>
<dbReference type="BioGRID" id="609043">
    <property type="interactions" value="8"/>
</dbReference>
<dbReference type="FunCoup" id="Q5VVM6">
    <property type="interactions" value="154"/>
</dbReference>
<dbReference type="IntAct" id="Q5VVM6">
    <property type="interactions" value="2"/>
</dbReference>
<dbReference type="STRING" id="9606.ENSP00000339280"/>
<dbReference type="GlyCosmos" id="Q5VVM6">
    <property type="glycosylation" value="1 site, 1 glycan"/>
</dbReference>
<dbReference type="GlyGen" id="Q5VVM6">
    <property type="glycosylation" value="1 site, 1 O-linked glycan (1 site)"/>
</dbReference>
<dbReference type="iPTMnet" id="Q5VVM6"/>
<dbReference type="PhosphoSitePlus" id="Q5VVM6"/>
<dbReference type="BioMuta" id="CCDC30"/>
<dbReference type="DMDM" id="74747263"/>
<dbReference type="jPOST" id="Q5VVM6"/>
<dbReference type="MassIVE" id="Q5VVM6"/>
<dbReference type="PaxDb" id="9606-ENSP00000339280"/>
<dbReference type="PeptideAtlas" id="Q5VVM6"/>
<dbReference type="ProteomicsDB" id="65476">
    <molecule id="Q5VVM6-1"/>
</dbReference>
<dbReference type="ProteomicsDB" id="65477">
    <molecule id="Q5VVM6-2"/>
</dbReference>
<dbReference type="Antibodypedia" id="52243">
    <property type="antibodies" value="62 antibodies from 10 providers"/>
</dbReference>
<dbReference type="DNASU" id="728621"/>
<dbReference type="Ensembl" id="ENST00000342022.8">
    <molecule id="Q5VVM6-1"/>
    <property type="protein sequence ID" value="ENSP00000339280.4"/>
    <property type="gene ID" value="ENSG00000186409.19"/>
</dbReference>
<dbReference type="GeneID" id="728621"/>
<dbReference type="KEGG" id="hsa:728621"/>
<dbReference type="UCSC" id="uc001chn.3">
    <molecule id="Q5VVM6-1"/>
    <property type="organism name" value="human"/>
</dbReference>
<dbReference type="AGR" id="HGNC:26103"/>
<dbReference type="CTD" id="728621"/>
<dbReference type="DisGeNET" id="728621"/>
<dbReference type="GeneCards" id="CCDC30"/>
<dbReference type="HGNC" id="HGNC:26103">
    <property type="gene designation" value="CCDC30"/>
</dbReference>
<dbReference type="HPA" id="ENSG00000186409">
    <property type="expression patterns" value="Tissue enhanced (choroid)"/>
</dbReference>
<dbReference type="MalaCards" id="CCDC30"/>
<dbReference type="neXtProt" id="NX_Q5VVM6"/>
<dbReference type="OpenTargets" id="ENSG00000186409"/>
<dbReference type="PharmGKB" id="PA165750513"/>
<dbReference type="VEuPathDB" id="HostDB:ENSG00000186409"/>
<dbReference type="eggNOG" id="ENOG502SNA5">
    <property type="taxonomic scope" value="Eukaryota"/>
</dbReference>
<dbReference type="GeneTree" id="ENSGT00390000007816"/>
<dbReference type="HOGENOM" id="CLU_022791_0_0_1"/>
<dbReference type="InParanoid" id="Q5VVM6"/>
<dbReference type="OrthoDB" id="10007527at2759"/>
<dbReference type="PAN-GO" id="Q5VVM6">
    <property type="GO annotations" value="0 GO annotations based on evolutionary models"/>
</dbReference>
<dbReference type="PhylomeDB" id="Q5VVM6"/>
<dbReference type="TreeFam" id="TF333239"/>
<dbReference type="PathwayCommons" id="Q5VVM6"/>
<dbReference type="SignaLink" id="Q5VVM6"/>
<dbReference type="BioGRID-ORCS" id="728621">
    <property type="hits" value="18 hits in 1149 CRISPR screens"/>
</dbReference>
<dbReference type="ChiTaRS" id="CCDC30">
    <property type="organism name" value="human"/>
</dbReference>
<dbReference type="GenomeRNAi" id="728621"/>
<dbReference type="Pharos" id="Q5VVM6">
    <property type="development level" value="Tdark"/>
</dbReference>
<dbReference type="PRO" id="PR:Q5VVM6"/>
<dbReference type="Proteomes" id="UP000005640">
    <property type="component" value="Chromosome 1"/>
</dbReference>
<dbReference type="RNAct" id="Q5VVM6">
    <property type="molecule type" value="protein"/>
</dbReference>
<dbReference type="Bgee" id="ENSG00000186409">
    <property type="expression patterns" value="Expressed in right uterine tube and 107 other cell types or tissues"/>
</dbReference>
<dbReference type="ExpressionAtlas" id="Q5VVM6">
    <property type="expression patterns" value="baseline and differential"/>
</dbReference>
<dbReference type="InterPro" id="IPR052825">
    <property type="entry name" value="CCD-Prefoldin_beta-like"/>
</dbReference>
<dbReference type="InterPro" id="IPR031476">
    <property type="entry name" value="DUF4686"/>
</dbReference>
<dbReference type="PANTHER" id="PTHR34479">
    <property type="entry name" value="COILED-COIL DOMAIN-CONTAINING PROTEIN 30"/>
    <property type="match status" value="1"/>
</dbReference>
<dbReference type="PANTHER" id="PTHR34479:SF1">
    <property type="entry name" value="COILED-COIL DOMAIN-CONTAINING PROTEIN 30"/>
    <property type="match status" value="1"/>
</dbReference>
<dbReference type="Pfam" id="PF15742">
    <property type="entry name" value="DUF4686"/>
    <property type="match status" value="1"/>
</dbReference>
<name>CCD30_HUMAN</name>